<evidence type="ECO:0000250" key="1"/>
<evidence type="ECO:0000250" key="2">
    <source>
        <dbReference type="UniProtKB" id="Q8N3E9"/>
    </source>
</evidence>
<evidence type="ECO:0000255" key="3"/>
<evidence type="ECO:0000255" key="4">
    <source>
        <dbReference type="PROSITE-ProRule" id="PRU00041"/>
    </source>
</evidence>
<evidence type="ECO:0000255" key="5">
    <source>
        <dbReference type="PROSITE-ProRule" id="PRU00270"/>
    </source>
</evidence>
<evidence type="ECO:0000255" key="6">
    <source>
        <dbReference type="PROSITE-ProRule" id="PRU00271"/>
    </source>
</evidence>
<evidence type="ECO:0000256" key="7">
    <source>
        <dbReference type="SAM" id="MobiDB-lite"/>
    </source>
</evidence>
<evidence type="ECO:0000269" key="8">
    <source>
    </source>
</evidence>
<evidence type="ECO:0000269" key="9">
    <source>
    </source>
</evidence>
<evidence type="ECO:0000305" key="10"/>
<evidence type="ECO:0000312" key="11">
    <source>
        <dbReference type="MGI" id="MGI:107451"/>
    </source>
</evidence>
<evidence type="ECO:0007744" key="12">
    <source>
    </source>
</evidence>
<evidence type="ECO:0007744" key="13">
    <source>
    </source>
</evidence>
<accession>Q8K2J0</accession>
<accession>A2AHR0</accession>
<accession>A2AHR1</accession>
<accession>Q3UME8</accession>
<accession>Q69Z55</accession>
<accession>Q8BL19</accession>
<proteinExistence type="evidence at protein level"/>
<sequence length="785" mass="88607">MLCGGWKRSRRSPEESRVSAQVAAPLAFPPSPASSDSSTKRPGLRALKKMGLTEDEDVQAMLRGSRLLKIRSRTWHKERLYRLQEDGLSVWFQRRIPRAASKHIFFVQHIEAVREGHQSEGLRRFGGAFAPACCLTIAFKGRRKNLDLAAPTAEEAQRWVRGLAKLRARLDAMSQRERLDHWIHSYLHRADSDQDSKMSFKEIKSLLRMVNVDMNDMYAYRLFKECDHSNNERLEGAEIEAFLRRLLKRPELEEIFRRYSGEDRVLSASELLEFLEDQGEDGATLACAQQLIQTYELNETAKQHELMTLDGFMMYLLSPEGAALNVAHTCVFQDMGQPLAHYFISSSHNTYLTDSQIGGTSSTEAYIRAFAQGCRCVELDCWEGPGGEPVIYHGHTLTSKILFRDVIQAVRDHAFTSSPYPVILSLENHCGLEQQAVMARHLRSILGDMLVTQALDSQNPEELPSPEQLKGRILVKGKKLPAARSEDGRILSDREEEEEEEEEAEEALEAAEQRSRAKQISPELSALAVYCCATRLRTLDPSPGPPQSCTVGSLSERKARKFTREAGTSFVRHNTQQLTRVYPLGLRMNSANYNPQEMWNSGCQLVALNFQTPGYEMDLNTGRFLINGQCGYVLKPAYLRQLNTTFDPECPGPPRTTLAIQVLTAQQLPKLNAEKPSSIVDPLVRVEIHGVPEDCAQKETDYVLNNGFNPCWEQTLQFRLRAPELVLVRFVVEDYDTTSPNDFVGQSTLPLSSLKQGYRHIHLLSKDGASLAPATLFVHIRIQNS</sequence>
<comment type="function">
    <text evidence="8 9">Hydrolyzes the phosphatidylinositol 4,5-bisphosphate (PIP2) to generate 2 second messenger molecules diacylglycerol (DAG) and inositol 1,4,5-trisphosphate (IP3). DAG mediates the activation of protein kinase C (PKC), while IP3 releases Ca(2+) from intracellular stores. Essential for trophoblast and placental development. May participate in cytokinesis by hydrolyzing PIP2 at the cleavage furrow. Regulates neurite outgrowth through the inhibition of RhoA/Rho kinase signaling (PubMed:21187285).</text>
</comment>
<comment type="catalytic activity">
    <reaction evidence="9">
        <text>a 1,2-diacyl-sn-glycero-3-phospho-(1D-myo-inositol-4,5-bisphosphate) + H2O = 1D-myo-inositol 1,4,5-trisphosphate + a 1,2-diacyl-sn-glycerol + H(+)</text>
        <dbReference type="Rhea" id="RHEA:33179"/>
        <dbReference type="ChEBI" id="CHEBI:15377"/>
        <dbReference type="ChEBI" id="CHEBI:15378"/>
        <dbReference type="ChEBI" id="CHEBI:17815"/>
        <dbReference type="ChEBI" id="CHEBI:58456"/>
        <dbReference type="ChEBI" id="CHEBI:203600"/>
        <dbReference type="EC" id="3.1.4.11"/>
    </reaction>
    <physiologicalReaction direction="left-to-right" evidence="9">
        <dbReference type="Rhea" id="RHEA:33180"/>
    </physiologicalReaction>
</comment>
<comment type="cofactor">
    <cofactor evidence="4">
        <name>Ca(2+)</name>
        <dbReference type="ChEBI" id="CHEBI:29108"/>
    </cofactor>
    <text evidence="2">Binds 5 Ca(2+) ions per subunit. Two of the Ca(2+) ions are bound to the C2 domain.</text>
</comment>
<comment type="activity regulation">
    <text evidence="2">Strongly activated by phosphatidic acid. Inhibited by phosphatidylethanolamine (PtdEtn), phosphatidylcholine (PtdCho), sphingomyelin and phosphatidylserine (PtdSer) (By similarity).</text>
</comment>
<comment type="subcellular location">
    <subcellularLocation>
        <location evidence="2">Membrane</location>
        <topology evidence="2">Peripheral membrane protein</topology>
    </subcellularLocation>
    <subcellularLocation>
        <location evidence="2">Cytoplasm</location>
    </subcellularLocation>
    <subcellularLocation>
        <location evidence="2">Cleavage furrow</location>
    </subcellularLocation>
    <text evidence="2">Localizes at the cleavage furrow during cytokinesis.</text>
</comment>
<comment type="tissue specificity">
    <text evidence="9">Expressed in cerebellum and cerebral cortex.</text>
</comment>
<comment type="developmental stage">
    <text evidence="9">Expression increases during embryonic or postnatal brain development from cerebral cortex at 14 dpc to P7 stage.</text>
</comment>
<comment type="domain">
    <text evidence="2">The C2 domain is a Ca(2+)-dependent membrane-targeting module.</text>
</comment>
<comment type="domain">
    <text evidence="2">The PH domain mediates interaction with the surface membrane by binding to PIP2.</text>
</comment>
<comment type="disruption phenotype">
    <text evidence="8">Mice lacking Plcd1 and Plcd3 die between 11.5 and 13.5 dpc. They exhibit severe disruption of the normal labyrinth architecture in the placenta and decreased placental vascularization, as well as abnormal proliferation and apoptosis of trophoblasts in the labyrinth area. Furthermore, Plcd1 and Plcd3 double knockout embryos supplied with a normal placenta by the tetraploid aggregation method survive beyond 14.5 dpc, indicating that the embryonic lethality is caused by a defect in trophoblasts.</text>
</comment>
<comment type="sequence caution" evidence="10">
    <conflict type="erroneous initiation">
        <sequence resource="EMBL-CDS" id="BAC32829"/>
    </conflict>
    <text>Truncated N-terminus.</text>
</comment>
<comment type="sequence caution" evidence="10">
    <conflict type="miscellaneous discrepancy">
        <sequence resource="EMBL-CDS" id="BAD32589"/>
    </conflict>
    <text>Intron retention.</text>
</comment>
<comment type="sequence caution" evidence="10">
    <conflict type="erroneous gene model prediction">
        <sequence resource="EMBL-CDS" id="CAM22088"/>
    </conflict>
</comment>
<feature type="chain" id="PRO_0000306822" description="1-phosphatidylinositol 4,5-bisphosphate phosphodiesterase delta-3">
    <location>
        <begin position="1"/>
        <end position="785"/>
    </location>
</feature>
<feature type="domain" description="PH">
    <location>
        <begin position="65"/>
        <end position="168"/>
    </location>
</feature>
<feature type="domain" description="EF-hand 1">
    <location>
        <begin position="178"/>
        <end position="213"/>
    </location>
</feature>
<feature type="domain" description="EF-hand 2">
    <location>
        <begin position="214"/>
        <end position="249"/>
    </location>
</feature>
<feature type="domain" description="EF-hand 3">
    <location>
        <begin position="246"/>
        <end position="281"/>
    </location>
</feature>
<feature type="domain" description="PI-PLC X-box" evidence="5">
    <location>
        <begin position="333"/>
        <end position="478"/>
    </location>
</feature>
<feature type="domain" description="PI-PLC Y-box" evidence="6">
    <location>
        <begin position="524"/>
        <end position="640"/>
    </location>
</feature>
<feature type="domain" description="C2" evidence="4">
    <location>
        <begin position="636"/>
        <end position="765"/>
    </location>
</feature>
<feature type="region of interest" description="Disordered" evidence="7">
    <location>
        <begin position="1"/>
        <end position="43"/>
    </location>
</feature>
<feature type="region of interest" description="Substrate binding" evidence="1">
    <location>
        <begin position="69"/>
        <end position="97"/>
    </location>
</feature>
<feature type="region of interest" description="Disordered" evidence="7">
    <location>
        <begin position="484"/>
        <end position="517"/>
    </location>
</feature>
<feature type="compositionally biased region" description="Basic and acidic residues" evidence="7">
    <location>
        <begin position="484"/>
        <end position="493"/>
    </location>
</feature>
<feature type="compositionally biased region" description="Acidic residues" evidence="7">
    <location>
        <begin position="494"/>
        <end position="509"/>
    </location>
</feature>
<feature type="active site" evidence="5">
    <location>
        <position position="348"/>
    </location>
</feature>
<feature type="active site" evidence="5">
    <location>
        <position position="393"/>
    </location>
</feature>
<feature type="binding site" evidence="3">
    <location>
        <position position="191"/>
    </location>
    <ligand>
        <name>Ca(2+)</name>
        <dbReference type="ChEBI" id="CHEBI:29108"/>
        <label>1</label>
    </ligand>
</feature>
<feature type="binding site" evidence="3">
    <location>
        <position position="193"/>
    </location>
    <ligand>
        <name>Ca(2+)</name>
        <dbReference type="ChEBI" id="CHEBI:29108"/>
        <label>1</label>
    </ligand>
</feature>
<feature type="binding site" evidence="3">
    <location>
        <position position="195"/>
    </location>
    <ligand>
        <name>Ca(2+)</name>
        <dbReference type="ChEBI" id="CHEBI:29108"/>
        <label>1</label>
    </ligand>
</feature>
<feature type="binding site" evidence="3">
    <location>
        <position position="197"/>
    </location>
    <ligand>
        <name>Ca(2+)</name>
        <dbReference type="ChEBI" id="CHEBI:29108"/>
        <label>1</label>
    </ligand>
</feature>
<feature type="binding site" evidence="3">
    <location>
        <position position="202"/>
    </location>
    <ligand>
        <name>Ca(2+)</name>
        <dbReference type="ChEBI" id="CHEBI:29108"/>
        <label>1</label>
    </ligand>
</feature>
<feature type="binding site" evidence="3">
    <location>
        <position position="227"/>
    </location>
    <ligand>
        <name>Ca(2+)</name>
        <dbReference type="ChEBI" id="CHEBI:29108"/>
        <label>2</label>
    </ligand>
</feature>
<feature type="binding site" evidence="3">
    <location>
        <position position="229"/>
    </location>
    <ligand>
        <name>Ca(2+)</name>
        <dbReference type="ChEBI" id="CHEBI:29108"/>
        <label>2</label>
    </ligand>
</feature>
<feature type="binding site" evidence="3">
    <location>
        <position position="231"/>
    </location>
    <ligand>
        <name>Ca(2+)</name>
        <dbReference type="ChEBI" id="CHEBI:29108"/>
        <label>2</label>
    </ligand>
</feature>
<feature type="binding site" evidence="3">
    <location>
        <position position="233"/>
    </location>
    <ligand>
        <name>Ca(2+)</name>
        <dbReference type="ChEBI" id="CHEBI:29108"/>
        <label>2</label>
    </ligand>
</feature>
<feature type="binding site" evidence="3">
    <location>
        <position position="238"/>
    </location>
    <ligand>
        <name>Ca(2+)</name>
        <dbReference type="ChEBI" id="CHEBI:29108"/>
        <label>2</label>
    </ligand>
</feature>
<feature type="binding site" evidence="1">
    <location>
        <position position="349"/>
    </location>
    <ligand>
        <name>Ca(2+)</name>
        <dbReference type="ChEBI" id="CHEBI:29108"/>
        <label>3</label>
        <note>catalytic</note>
    </ligand>
</feature>
<feature type="binding site" evidence="1">
    <location>
        <position position="378"/>
    </location>
    <ligand>
        <name>Ca(2+)</name>
        <dbReference type="ChEBI" id="CHEBI:29108"/>
        <label>3</label>
        <note>catalytic</note>
    </ligand>
</feature>
<feature type="binding site" evidence="1">
    <location>
        <position position="380"/>
    </location>
    <ligand>
        <name>Ca(2+)</name>
        <dbReference type="ChEBI" id="CHEBI:29108"/>
        <label>3</label>
        <note>catalytic</note>
    </ligand>
</feature>
<feature type="binding site" evidence="1">
    <location>
        <position position="427"/>
    </location>
    <ligand>
        <name>Ca(2+)</name>
        <dbReference type="ChEBI" id="CHEBI:29108"/>
        <label>3</label>
        <note>catalytic</note>
    </ligand>
</feature>
<feature type="binding site" evidence="1">
    <location>
        <position position="476"/>
    </location>
    <ligand>
        <name>substrate</name>
    </ligand>
</feature>
<feature type="binding site" evidence="1">
    <location>
        <position position="478"/>
    </location>
    <ligand>
        <name>substrate</name>
    </ligand>
</feature>
<feature type="binding site" evidence="1">
    <location>
        <position position="553"/>
    </location>
    <ligand>
        <name>substrate</name>
    </ligand>
</feature>
<feature type="binding site" evidence="1">
    <location>
        <position position="580"/>
    </location>
    <ligand>
        <name>substrate</name>
    </ligand>
</feature>
<feature type="binding site" evidence="1">
    <location>
        <position position="679"/>
    </location>
    <ligand>
        <name>Ca(2+)</name>
        <dbReference type="ChEBI" id="CHEBI:29108"/>
        <label>4</label>
    </ligand>
</feature>
<feature type="binding site" evidence="1">
    <location>
        <position position="681"/>
    </location>
    <ligand>
        <name>Ca(2+)</name>
        <dbReference type="ChEBI" id="CHEBI:29108"/>
        <label>4</label>
    </ligand>
</feature>
<feature type="binding site" evidence="1">
    <location>
        <position position="705"/>
    </location>
    <ligand>
        <name>Ca(2+)</name>
        <dbReference type="ChEBI" id="CHEBI:29108"/>
        <label>4</label>
    </ligand>
</feature>
<feature type="binding site" evidence="1">
    <location>
        <position position="734"/>
    </location>
    <ligand>
        <name>Ca(2+)</name>
        <dbReference type="ChEBI" id="CHEBI:29108"/>
        <label>5</label>
    </ligand>
</feature>
<feature type="binding site" evidence="1">
    <location>
        <position position="735"/>
    </location>
    <ligand>
        <name>Ca(2+)</name>
        <dbReference type="ChEBI" id="CHEBI:29108"/>
        <label>5</label>
    </ligand>
</feature>
<feature type="binding site" evidence="1">
    <location>
        <position position="736"/>
    </location>
    <ligand>
        <name>Ca(2+)</name>
        <dbReference type="ChEBI" id="CHEBI:29108"/>
        <label>5</label>
    </ligand>
</feature>
<feature type="modified residue" description="Phosphoserine" evidence="2">
    <location>
        <position position="101"/>
    </location>
</feature>
<feature type="modified residue" description="Phosphoserine" evidence="12 13">
    <location>
        <position position="492"/>
    </location>
</feature>
<feature type="modified residue" description="Phosphoserine" evidence="2">
    <location>
        <position position="569"/>
    </location>
</feature>
<feature type="mutagenesis site" description="Loss of phosphatidylinositol 4,5-bisphosphate hydrolyzing activity. In neurons, generates supernumerary protrusions." evidence="9">
    <original>H</original>
    <variation>A</variation>
    <location>
        <position position="393"/>
    </location>
</feature>
<feature type="sequence conflict" description="In Ref. 2; BAE26150." evidence="10" ref="2">
    <original>S</original>
    <variation>N</variation>
    <location>
        <position position="199"/>
    </location>
</feature>
<feature type="sequence conflict" description="In Ref. 1; BAD32589." evidence="10" ref="1">
    <original>AK</original>
    <variation>GE</variation>
    <location>
        <begin position="301"/>
        <end position="302"/>
    </location>
</feature>
<feature type="sequence conflict" description="In Ref. 2; BAE26150." evidence="10" ref="2">
    <original>E</original>
    <variation>K</variation>
    <location>
        <position position="378"/>
    </location>
</feature>
<feature type="sequence conflict" description="In Ref. 4; AAH31392." evidence="10" ref="4">
    <original>D</original>
    <variation>E</variation>
    <location>
        <position position="540"/>
    </location>
</feature>
<feature type="sequence conflict" description="In Ref. 2; BAE26150." evidence="10" ref="2">
    <original>A</original>
    <variation>T</variation>
    <location>
        <position position="659"/>
    </location>
</feature>
<feature type="sequence conflict" description="In Ref. 2; BAE26150." evidence="10" ref="2">
    <original>I</original>
    <variation>V</variation>
    <location>
        <position position="660"/>
    </location>
</feature>
<reference key="1">
    <citation type="journal article" date="2004" name="DNA Res.">
        <title>Prediction of the coding sequences of mouse homologues of KIAA gene: IV. The complete nucleotide sequences of 500 mouse KIAA-homologous cDNAs identified by screening of terminal sequences of cDNA clones randomly sampled from size-fractionated libraries.</title>
        <authorList>
            <person name="Okazaki N."/>
            <person name="Kikuno R."/>
            <person name="Ohara R."/>
            <person name="Inamoto S."/>
            <person name="Koseki H."/>
            <person name="Hiraoka S."/>
            <person name="Saga Y."/>
            <person name="Seino S."/>
            <person name="Nishimura M."/>
            <person name="Kaisho T."/>
            <person name="Hoshino K."/>
            <person name="Kitamura H."/>
            <person name="Nagase T."/>
            <person name="Ohara O."/>
            <person name="Koga H."/>
        </authorList>
    </citation>
    <scope>NUCLEOTIDE SEQUENCE [LARGE SCALE MRNA]</scope>
    <source>
        <tissue>Embryonic intestine</tissue>
    </source>
</reference>
<reference key="2">
    <citation type="journal article" date="2005" name="Science">
        <title>The transcriptional landscape of the mammalian genome.</title>
        <authorList>
            <person name="Carninci P."/>
            <person name="Kasukawa T."/>
            <person name="Katayama S."/>
            <person name="Gough J."/>
            <person name="Frith M.C."/>
            <person name="Maeda N."/>
            <person name="Oyama R."/>
            <person name="Ravasi T."/>
            <person name="Lenhard B."/>
            <person name="Wells C."/>
            <person name="Kodzius R."/>
            <person name="Shimokawa K."/>
            <person name="Bajic V.B."/>
            <person name="Brenner S.E."/>
            <person name="Batalov S."/>
            <person name="Forrest A.R."/>
            <person name="Zavolan M."/>
            <person name="Davis M.J."/>
            <person name="Wilming L.G."/>
            <person name="Aidinis V."/>
            <person name="Allen J.E."/>
            <person name="Ambesi-Impiombato A."/>
            <person name="Apweiler R."/>
            <person name="Aturaliya R.N."/>
            <person name="Bailey T.L."/>
            <person name="Bansal M."/>
            <person name="Baxter L."/>
            <person name="Beisel K.W."/>
            <person name="Bersano T."/>
            <person name="Bono H."/>
            <person name="Chalk A.M."/>
            <person name="Chiu K.P."/>
            <person name="Choudhary V."/>
            <person name="Christoffels A."/>
            <person name="Clutterbuck D.R."/>
            <person name="Crowe M.L."/>
            <person name="Dalla E."/>
            <person name="Dalrymple B.P."/>
            <person name="de Bono B."/>
            <person name="Della Gatta G."/>
            <person name="di Bernardo D."/>
            <person name="Down T."/>
            <person name="Engstrom P."/>
            <person name="Fagiolini M."/>
            <person name="Faulkner G."/>
            <person name="Fletcher C.F."/>
            <person name="Fukushima T."/>
            <person name="Furuno M."/>
            <person name="Futaki S."/>
            <person name="Gariboldi M."/>
            <person name="Georgii-Hemming P."/>
            <person name="Gingeras T.R."/>
            <person name="Gojobori T."/>
            <person name="Green R.E."/>
            <person name="Gustincich S."/>
            <person name="Harbers M."/>
            <person name="Hayashi Y."/>
            <person name="Hensch T.K."/>
            <person name="Hirokawa N."/>
            <person name="Hill D."/>
            <person name="Huminiecki L."/>
            <person name="Iacono M."/>
            <person name="Ikeo K."/>
            <person name="Iwama A."/>
            <person name="Ishikawa T."/>
            <person name="Jakt M."/>
            <person name="Kanapin A."/>
            <person name="Katoh M."/>
            <person name="Kawasawa Y."/>
            <person name="Kelso J."/>
            <person name="Kitamura H."/>
            <person name="Kitano H."/>
            <person name="Kollias G."/>
            <person name="Krishnan S.P."/>
            <person name="Kruger A."/>
            <person name="Kummerfeld S.K."/>
            <person name="Kurochkin I.V."/>
            <person name="Lareau L.F."/>
            <person name="Lazarevic D."/>
            <person name="Lipovich L."/>
            <person name="Liu J."/>
            <person name="Liuni S."/>
            <person name="McWilliam S."/>
            <person name="Madan Babu M."/>
            <person name="Madera M."/>
            <person name="Marchionni L."/>
            <person name="Matsuda H."/>
            <person name="Matsuzawa S."/>
            <person name="Miki H."/>
            <person name="Mignone F."/>
            <person name="Miyake S."/>
            <person name="Morris K."/>
            <person name="Mottagui-Tabar S."/>
            <person name="Mulder N."/>
            <person name="Nakano N."/>
            <person name="Nakauchi H."/>
            <person name="Ng P."/>
            <person name="Nilsson R."/>
            <person name="Nishiguchi S."/>
            <person name="Nishikawa S."/>
            <person name="Nori F."/>
            <person name="Ohara O."/>
            <person name="Okazaki Y."/>
            <person name="Orlando V."/>
            <person name="Pang K.C."/>
            <person name="Pavan W.J."/>
            <person name="Pavesi G."/>
            <person name="Pesole G."/>
            <person name="Petrovsky N."/>
            <person name="Piazza S."/>
            <person name="Reed J."/>
            <person name="Reid J.F."/>
            <person name="Ring B.Z."/>
            <person name="Ringwald M."/>
            <person name="Rost B."/>
            <person name="Ruan Y."/>
            <person name="Salzberg S.L."/>
            <person name="Sandelin A."/>
            <person name="Schneider C."/>
            <person name="Schoenbach C."/>
            <person name="Sekiguchi K."/>
            <person name="Semple C.A."/>
            <person name="Seno S."/>
            <person name="Sessa L."/>
            <person name="Sheng Y."/>
            <person name="Shibata Y."/>
            <person name="Shimada H."/>
            <person name="Shimada K."/>
            <person name="Silva D."/>
            <person name="Sinclair B."/>
            <person name="Sperling S."/>
            <person name="Stupka E."/>
            <person name="Sugiura K."/>
            <person name="Sultana R."/>
            <person name="Takenaka Y."/>
            <person name="Taki K."/>
            <person name="Tammoja K."/>
            <person name="Tan S.L."/>
            <person name="Tang S."/>
            <person name="Taylor M.S."/>
            <person name="Tegner J."/>
            <person name="Teichmann S.A."/>
            <person name="Ueda H.R."/>
            <person name="van Nimwegen E."/>
            <person name="Verardo R."/>
            <person name="Wei C.L."/>
            <person name="Yagi K."/>
            <person name="Yamanishi H."/>
            <person name="Zabarovsky E."/>
            <person name="Zhu S."/>
            <person name="Zimmer A."/>
            <person name="Hide W."/>
            <person name="Bult C."/>
            <person name="Grimmond S.M."/>
            <person name="Teasdale R.D."/>
            <person name="Liu E.T."/>
            <person name="Brusic V."/>
            <person name="Quackenbush J."/>
            <person name="Wahlestedt C."/>
            <person name="Mattick J.S."/>
            <person name="Hume D.A."/>
            <person name="Kai C."/>
            <person name="Sasaki D."/>
            <person name="Tomaru Y."/>
            <person name="Fukuda S."/>
            <person name="Kanamori-Katayama M."/>
            <person name="Suzuki M."/>
            <person name="Aoki J."/>
            <person name="Arakawa T."/>
            <person name="Iida J."/>
            <person name="Imamura K."/>
            <person name="Itoh M."/>
            <person name="Kato T."/>
            <person name="Kawaji H."/>
            <person name="Kawagashira N."/>
            <person name="Kawashima T."/>
            <person name="Kojima M."/>
            <person name="Kondo S."/>
            <person name="Konno H."/>
            <person name="Nakano K."/>
            <person name="Ninomiya N."/>
            <person name="Nishio T."/>
            <person name="Okada M."/>
            <person name="Plessy C."/>
            <person name="Shibata K."/>
            <person name="Shiraki T."/>
            <person name="Suzuki S."/>
            <person name="Tagami M."/>
            <person name="Waki K."/>
            <person name="Watahiki A."/>
            <person name="Okamura-Oho Y."/>
            <person name="Suzuki H."/>
            <person name="Kawai J."/>
            <person name="Hayashizaki Y."/>
        </authorList>
    </citation>
    <scope>NUCLEOTIDE SEQUENCE [LARGE SCALE MRNA]</scope>
    <source>
        <strain>C57BL/6J</strain>
        <tissue>Adipose tissue</tissue>
        <tissue>Mammary gland</tissue>
    </source>
</reference>
<reference key="3">
    <citation type="journal article" date="2009" name="PLoS Biol.">
        <title>Lineage-specific biology revealed by a finished genome assembly of the mouse.</title>
        <authorList>
            <person name="Church D.M."/>
            <person name="Goodstadt L."/>
            <person name="Hillier L.W."/>
            <person name="Zody M.C."/>
            <person name="Goldstein S."/>
            <person name="She X."/>
            <person name="Bult C.J."/>
            <person name="Agarwala R."/>
            <person name="Cherry J.L."/>
            <person name="DiCuccio M."/>
            <person name="Hlavina W."/>
            <person name="Kapustin Y."/>
            <person name="Meric P."/>
            <person name="Maglott D."/>
            <person name="Birtle Z."/>
            <person name="Marques A.C."/>
            <person name="Graves T."/>
            <person name="Zhou S."/>
            <person name="Teague B."/>
            <person name="Potamousis K."/>
            <person name="Churas C."/>
            <person name="Place M."/>
            <person name="Herschleb J."/>
            <person name="Runnheim R."/>
            <person name="Forrest D."/>
            <person name="Amos-Landgraf J."/>
            <person name="Schwartz D.C."/>
            <person name="Cheng Z."/>
            <person name="Lindblad-Toh K."/>
            <person name="Eichler E.E."/>
            <person name="Ponting C.P."/>
        </authorList>
    </citation>
    <scope>NUCLEOTIDE SEQUENCE [LARGE SCALE GENOMIC DNA]</scope>
    <source>
        <strain>C57BL/6J</strain>
    </source>
</reference>
<reference key="4">
    <citation type="journal article" date="2004" name="Genome Res.">
        <title>The status, quality, and expansion of the NIH full-length cDNA project: the Mammalian Gene Collection (MGC).</title>
        <authorList>
            <consortium name="The MGC Project Team"/>
        </authorList>
    </citation>
    <scope>NUCLEOTIDE SEQUENCE [LARGE SCALE MRNA]</scope>
    <source>
        <strain>FVB/N</strain>
        <tissue>Mammary tumor</tissue>
    </source>
</reference>
<reference key="5">
    <citation type="journal article" date="2005" name="Mol. Cell. Biol.">
        <title>Phospholipase C-delta1 and -delta3 are essential in the trophoblast for placental development.</title>
        <authorList>
            <person name="Nakamura Y."/>
            <person name="Hamada Y."/>
            <person name="Fujiwara T."/>
            <person name="Enomoto H."/>
            <person name="Hiroe T."/>
            <person name="Tanaka S."/>
            <person name="Nose M."/>
            <person name="Nakahara M."/>
            <person name="Yoshida N."/>
            <person name="Takenawa T."/>
            <person name="Fukami K."/>
        </authorList>
    </citation>
    <scope>FUNCTION</scope>
    <scope>DISRUPTION PHENOTYPE</scope>
</reference>
<reference key="6">
    <citation type="journal article" date="2009" name="Immunity">
        <title>The phagosomal proteome in interferon-gamma-activated macrophages.</title>
        <authorList>
            <person name="Trost M."/>
            <person name="English L."/>
            <person name="Lemieux S."/>
            <person name="Courcelles M."/>
            <person name="Desjardins M."/>
            <person name="Thibault P."/>
        </authorList>
    </citation>
    <scope>PHOSPHORYLATION [LARGE SCALE ANALYSIS] AT SER-492</scope>
    <scope>IDENTIFICATION BY MASS SPECTROMETRY [LARGE SCALE ANALYSIS]</scope>
</reference>
<reference key="7">
    <citation type="journal article" date="2010" name="Cell">
        <title>A tissue-specific atlas of mouse protein phosphorylation and expression.</title>
        <authorList>
            <person name="Huttlin E.L."/>
            <person name="Jedrychowski M.P."/>
            <person name="Elias J.E."/>
            <person name="Goswami T."/>
            <person name="Rad R."/>
            <person name="Beausoleil S.A."/>
            <person name="Villen J."/>
            <person name="Haas W."/>
            <person name="Sowa M.E."/>
            <person name="Gygi S.P."/>
        </authorList>
    </citation>
    <scope>PHOSPHORYLATION [LARGE SCALE ANALYSIS] AT SER-492</scope>
    <scope>IDENTIFICATION BY MASS SPECTROMETRY [LARGE SCALE ANALYSIS]</scope>
    <source>
        <tissue>Brain</tissue>
        <tissue>Testis</tissue>
    </source>
</reference>
<reference key="8">
    <citation type="journal article" date="2011" name="J. Biol. Chem.">
        <title>Phospholipase Cdelta3 regulates RhoA/Rho kinase signaling and neurite outgrowth.</title>
        <authorList>
            <person name="Kouchi Z."/>
            <person name="Igarashi T."/>
            <person name="Shibayama N."/>
            <person name="Inanobe S."/>
            <person name="Sakurai K."/>
            <person name="Yamaguchi H."/>
            <person name="Fukuda T."/>
            <person name="Yanagi S."/>
            <person name="Nakamura Y."/>
            <person name="Fukami K."/>
        </authorList>
    </citation>
    <scope>FUNCTION</scope>
    <scope>CATALYTIC ACTIVITY</scope>
    <scope>TISSUE SPECIFICITY</scope>
    <scope>MUTAGENESIS OF HIS-393</scope>
    <scope>DEVELOPMENTAL STAGE</scope>
</reference>
<dbReference type="EC" id="3.1.4.11" evidence="9"/>
<dbReference type="EMBL" id="AK173311">
    <property type="protein sequence ID" value="BAD32589.1"/>
    <property type="status" value="ALT_SEQ"/>
    <property type="molecule type" value="Transcribed_RNA"/>
</dbReference>
<dbReference type="EMBL" id="AK046669">
    <property type="protein sequence ID" value="BAC32829.1"/>
    <property type="status" value="ALT_INIT"/>
    <property type="molecule type" value="mRNA"/>
</dbReference>
<dbReference type="EMBL" id="AK144950">
    <property type="protein sequence ID" value="BAE26150.1"/>
    <property type="molecule type" value="mRNA"/>
</dbReference>
<dbReference type="EMBL" id="AL731805">
    <property type="protein sequence ID" value="CAM22088.1"/>
    <property type="status" value="ALT_SEQ"/>
    <property type="molecule type" value="Genomic_DNA"/>
</dbReference>
<dbReference type="EMBL" id="AL731805">
    <property type="protein sequence ID" value="CAM22089.1"/>
    <property type="molecule type" value="Genomic_DNA"/>
</dbReference>
<dbReference type="EMBL" id="BC031392">
    <property type="protein sequence ID" value="AAH31392.1"/>
    <property type="molecule type" value="mRNA"/>
</dbReference>
<dbReference type="CCDS" id="CCDS25512.1"/>
<dbReference type="RefSeq" id="NP_690026.2">
    <property type="nucleotide sequence ID" value="NM_152813.3"/>
</dbReference>
<dbReference type="SMR" id="Q8K2J0"/>
<dbReference type="BioGRID" id="215387">
    <property type="interactions" value="3"/>
</dbReference>
<dbReference type="FunCoup" id="Q8K2J0">
    <property type="interactions" value="963"/>
</dbReference>
<dbReference type="STRING" id="10090.ENSMUSP00000099366"/>
<dbReference type="ChEMBL" id="CHEMBL4879495"/>
<dbReference type="SwissLipids" id="SLP:000001068"/>
<dbReference type="GlyGen" id="Q8K2J0">
    <property type="glycosylation" value="1 site, 1 N-linked glycan (1 site)"/>
</dbReference>
<dbReference type="iPTMnet" id="Q8K2J0"/>
<dbReference type="PhosphoSitePlus" id="Q8K2J0"/>
<dbReference type="jPOST" id="Q8K2J0"/>
<dbReference type="PaxDb" id="10090-ENSMUSP00000099366"/>
<dbReference type="PeptideAtlas" id="Q8K2J0"/>
<dbReference type="ProteomicsDB" id="289529"/>
<dbReference type="Pumba" id="Q8K2J0"/>
<dbReference type="Antibodypedia" id="8300">
    <property type="antibodies" value="90 antibodies from 26 providers"/>
</dbReference>
<dbReference type="DNASU" id="72469"/>
<dbReference type="Ensembl" id="ENSMUST00000103077.2">
    <property type="protein sequence ID" value="ENSMUSP00000099366.2"/>
    <property type="gene ID" value="ENSMUSG00000020937.15"/>
</dbReference>
<dbReference type="GeneID" id="72469"/>
<dbReference type="KEGG" id="mmu:72469"/>
<dbReference type="UCSC" id="uc007ltf.2">
    <property type="organism name" value="mouse"/>
</dbReference>
<dbReference type="AGR" id="MGI:107451"/>
<dbReference type="CTD" id="113026"/>
<dbReference type="MGI" id="MGI:107451">
    <property type="gene designation" value="Plcd3"/>
</dbReference>
<dbReference type="VEuPathDB" id="HostDB:ENSMUSG00000020937"/>
<dbReference type="eggNOG" id="KOG0169">
    <property type="taxonomic scope" value="Eukaryota"/>
</dbReference>
<dbReference type="GeneTree" id="ENSGT00940000156993"/>
<dbReference type="HOGENOM" id="CLU_002738_0_2_1"/>
<dbReference type="InParanoid" id="Q8K2J0"/>
<dbReference type="OMA" id="LAVYCHA"/>
<dbReference type="OrthoDB" id="269822at2759"/>
<dbReference type="PhylomeDB" id="Q8K2J0"/>
<dbReference type="TreeFam" id="TF313216"/>
<dbReference type="Reactome" id="R-MMU-1855204">
    <property type="pathway name" value="Synthesis of IP3 and IP4 in the cytosol"/>
</dbReference>
<dbReference type="BioGRID-ORCS" id="72469">
    <property type="hits" value="2 hits in 79 CRISPR screens"/>
</dbReference>
<dbReference type="ChiTaRS" id="Plcd3">
    <property type="organism name" value="mouse"/>
</dbReference>
<dbReference type="PRO" id="PR:Q8K2J0"/>
<dbReference type="Proteomes" id="UP000000589">
    <property type="component" value="Chromosome 11"/>
</dbReference>
<dbReference type="RNAct" id="Q8K2J0">
    <property type="molecule type" value="protein"/>
</dbReference>
<dbReference type="Bgee" id="ENSMUSG00000020937">
    <property type="expression patterns" value="Expressed in retinal neural layer and 208 other cell types or tissues"/>
</dbReference>
<dbReference type="ExpressionAtlas" id="Q8K2J0">
    <property type="expression patterns" value="baseline and differential"/>
</dbReference>
<dbReference type="GO" id="GO:0032154">
    <property type="term" value="C:cleavage furrow"/>
    <property type="evidence" value="ECO:0007669"/>
    <property type="project" value="UniProtKB-SubCell"/>
</dbReference>
<dbReference type="GO" id="GO:0005737">
    <property type="term" value="C:cytoplasm"/>
    <property type="evidence" value="ECO:0007669"/>
    <property type="project" value="UniProtKB-SubCell"/>
</dbReference>
<dbReference type="GO" id="GO:0046872">
    <property type="term" value="F:metal ion binding"/>
    <property type="evidence" value="ECO:0007669"/>
    <property type="project" value="UniProtKB-KW"/>
</dbReference>
<dbReference type="GO" id="GO:0004435">
    <property type="term" value="F:phosphatidylinositol-4,5-bisphosphate phospholipase C activity"/>
    <property type="evidence" value="ECO:0007669"/>
    <property type="project" value="UniProtKB-EC"/>
</dbReference>
<dbReference type="GO" id="GO:0001525">
    <property type="term" value="P:angiogenesis"/>
    <property type="evidence" value="ECO:0000316"/>
    <property type="project" value="MGI"/>
</dbReference>
<dbReference type="GO" id="GO:0035556">
    <property type="term" value="P:intracellular signal transduction"/>
    <property type="evidence" value="ECO:0007669"/>
    <property type="project" value="InterPro"/>
</dbReference>
<dbReference type="GO" id="GO:0060716">
    <property type="term" value="P:labyrinthine layer blood vessel development"/>
    <property type="evidence" value="ECO:0000316"/>
    <property type="project" value="MGI"/>
</dbReference>
<dbReference type="GO" id="GO:0016042">
    <property type="term" value="P:lipid catabolic process"/>
    <property type="evidence" value="ECO:0007669"/>
    <property type="project" value="UniProtKB-KW"/>
</dbReference>
<dbReference type="GO" id="GO:0042127">
    <property type="term" value="P:regulation of cell population proliferation"/>
    <property type="evidence" value="ECO:0000316"/>
    <property type="project" value="MGI"/>
</dbReference>
<dbReference type="CDD" id="cd00275">
    <property type="entry name" value="C2_PLC_like"/>
    <property type="match status" value="1"/>
</dbReference>
<dbReference type="CDD" id="cd16218">
    <property type="entry name" value="EFh_PI-PLCdelta3"/>
    <property type="match status" value="1"/>
</dbReference>
<dbReference type="CDD" id="cd13363">
    <property type="entry name" value="PH_PLC_delta"/>
    <property type="match status" value="1"/>
</dbReference>
<dbReference type="CDD" id="cd08630">
    <property type="entry name" value="PI-PLCc_delta3"/>
    <property type="match status" value="1"/>
</dbReference>
<dbReference type="FunFam" id="1.10.238.10:FF:000005">
    <property type="entry name" value="Phosphoinositide phospholipase C"/>
    <property type="match status" value="1"/>
</dbReference>
<dbReference type="FunFam" id="1.10.238.10:FF:000071">
    <property type="entry name" value="Phosphoinositide phospholipase C"/>
    <property type="match status" value="1"/>
</dbReference>
<dbReference type="FunFam" id="2.30.29.30:FF:000088">
    <property type="entry name" value="Phosphoinositide phospholipase C"/>
    <property type="match status" value="1"/>
</dbReference>
<dbReference type="FunFam" id="2.60.40.150:FF:000058">
    <property type="entry name" value="Phosphoinositide phospholipase C"/>
    <property type="match status" value="1"/>
</dbReference>
<dbReference type="FunFam" id="3.20.20.190:FF:000026">
    <property type="entry name" value="Phosphoinositide phospholipase C"/>
    <property type="match status" value="1"/>
</dbReference>
<dbReference type="Gene3D" id="2.60.40.150">
    <property type="entry name" value="C2 domain"/>
    <property type="match status" value="1"/>
</dbReference>
<dbReference type="Gene3D" id="1.10.238.10">
    <property type="entry name" value="EF-hand"/>
    <property type="match status" value="2"/>
</dbReference>
<dbReference type="Gene3D" id="3.20.20.190">
    <property type="entry name" value="Phosphatidylinositol (PI) phosphodiesterase"/>
    <property type="match status" value="1"/>
</dbReference>
<dbReference type="Gene3D" id="2.30.29.30">
    <property type="entry name" value="Pleckstrin-homology domain (PH domain)/Phosphotyrosine-binding domain (PTB)"/>
    <property type="match status" value="1"/>
</dbReference>
<dbReference type="InterPro" id="IPR000008">
    <property type="entry name" value="C2_dom"/>
</dbReference>
<dbReference type="InterPro" id="IPR035892">
    <property type="entry name" value="C2_domain_sf"/>
</dbReference>
<dbReference type="InterPro" id="IPR011992">
    <property type="entry name" value="EF-hand-dom_pair"/>
</dbReference>
<dbReference type="InterPro" id="IPR011993">
    <property type="entry name" value="PH-like_dom_sf"/>
</dbReference>
<dbReference type="InterPro" id="IPR001849">
    <property type="entry name" value="PH_domain"/>
</dbReference>
<dbReference type="InterPro" id="IPR001192">
    <property type="entry name" value="PI-PLC_fam"/>
</dbReference>
<dbReference type="InterPro" id="IPR039504">
    <property type="entry name" value="PLC-delta3_EF-hand"/>
</dbReference>
<dbReference type="InterPro" id="IPR017946">
    <property type="entry name" value="PLC-like_Pdiesterase_TIM-brl"/>
</dbReference>
<dbReference type="InterPro" id="IPR000909">
    <property type="entry name" value="PLipase_C_PInositol-sp_X_dom"/>
</dbReference>
<dbReference type="InterPro" id="IPR001711">
    <property type="entry name" value="PLipase_C_Pinositol-sp_Y"/>
</dbReference>
<dbReference type="PANTHER" id="PTHR10336:SF33">
    <property type="entry name" value="1-PHOSPHATIDYLINOSITOL 4,5-BISPHOSPHATE PHOSPHODIESTERASE DELTA-3"/>
    <property type="match status" value="1"/>
</dbReference>
<dbReference type="PANTHER" id="PTHR10336">
    <property type="entry name" value="PHOSPHOINOSITIDE-SPECIFIC PHOSPHOLIPASE C FAMILY PROTEIN"/>
    <property type="match status" value="1"/>
</dbReference>
<dbReference type="Pfam" id="PF00168">
    <property type="entry name" value="C2"/>
    <property type="match status" value="1"/>
</dbReference>
<dbReference type="Pfam" id="PF14788">
    <property type="entry name" value="EF-hand_10"/>
    <property type="match status" value="1"/>
</dbReference>
<dbReference type="Pfam" id="PF00388">
    <property type="entry name" value="PI-PLC-X"/>
    <property type="match status" value="1"/>
</dbReference>
<dbReference type="Pfam" id="PF00387">
    <property type="entry name" value="PI-PLC-Y"/>
    <property type="match status" value="1"/>
</dbReference>
<dbReference type="PRINTS" id="PR00390">
    <property type="entry name" value="PHPHLIPASEC"/>
</dbReference>
<dbReference type="SMART" id="SM00239">
    <property type="entry name" value="C2"/>
    <property type="match status" value="1"/>
</dbReference>
<dbReference type="SMART" id="SM00233">
    <property type="entry name" value="PH"/>
    <property type="match status" value="1"/>
</dbReference>
<dbReference type="SMART" id="SM00148">
    <property type="entry name" value="PLCXc"/>
    <property type="match status" value="1"/>
</dbReference>
<dbReference type="SMART" id="SM00149">
    <property type="entry name" value="PLCYc"/>
    <property type="match status" value="1"/>
</dbReference>
<dbReference type="SUPFAM" id="SSF49562">
    <property type="entry name" value="C2 domain (Calcium/lipid-binding domain, CaLB)"/>
    <property type="match status" value="1"/>
</dbReference>
<dbReference type="SUPFAM" id="SSF47473">
    <property type="entry name" value="EF-hand"/>
    <property type="match status" value="1"/>
</dbReference>
<dbReference type="SUPFAM" id="SSF50729">
    <property type="entry name" value="PH domain-like"/>
    <property type="match status" value="1"/>
</dbReference>
<dbReference type="SUPFAM" id="SSF51695">
    <property type="entry name" value="PLC-like phosphodiesterases"/>
    <property type="match status" value="1"/>
</dbReference>
<dbReference type="PROSITE" id="PS50004">
    <property type="entry name" value="C2"/>
    <property type="match status" value="1"/>
</dbReference>
<dbReference type="PROSITE" id="PS50007">
    <property type="entry name" value="PIPLC_X_DOMAIN"/>
    <property type="match status" value="1"/>
</dbReference>
<dbReference type="PROSITE" id="PS50008">
    <property type="entry name" value="PIPLC_Y_DOMAIN"/>
    <property type="match status" value="1"/>
</dbReference>
<name>PLCD3_MOUSE</name>
<organism>
    <name type="scientific">Mus musculus</name>
    <name type="common">Mouse</name>
    <dbReference type="NCBI Taxonomy" id="10090"/>
    <lineage>
        <taxon>Eukaryota</taxon>
        <taxon>Metazoa</taxon>
        <taxon>Chordata</taxon>
        <taxon>Craniata</taxon>
        <taxon>Vertebrata</taxon>
        <taxon>Euteleostomi</taxon>
        <taxon>Mammalia</taxon>
        <taxon>Eutheria</taxon>
        <taxon>Euarchontoglires</taxon>
        <taxon>Glires</taxon>
        <taxon>Rodentia</taxon>
        <taxon>Myomorpha</taxon>
        <taxon>Muroidea</taxon>
        <taxon>Muridae</taxon>
        <taxon>Murinae</taxon>
        <taxon>Mus</taxon>
        <taxon>Mus</taxon>
    </lineage>
</organism>
<protein>
    <recommendedName>
        <fullName evidence="10">1-phosphatidylinositol 4,5-bisphosphate phosphodiesterase delta-3</fullName>
        <ecNumber evidence="9">3.1.4.11</ecNumber>
    </recommendedName>
    <alternativeName>
        <fullName>Phosphoinositide phospholipase C-delta-3</fullName>
    </alternativeName>
    <alternativeName>
        <fullName>Phospholipase C-delta-3</fullName>
        <shortName>PLC-delta-3</shortName>
    </alternativeName>
</protein>
<gene>
    <name evidence="11" type="primary">Plcd3</name>
    <name type="synonym">Kiaa1964</name>
</gene>
<keyword id="KW-0106">Calcium</keyword>
<keyword id="KW-0963">Cytoplasm</keyword>
<keyword id="KW-0378">Hydrolase</keyword>
<keyword id="KW-0442">Lipid degradation</keyword>
<keyword id="KW-0443">Lipid metabolism</keyword>
<keyword id="KW-0472">Membrane</keyword>
<keyword id="KW-0479">Metal-binding</keyword>
<keyword id="KW-0597">Phosphoprotein</keyword>
<keyword id="KW-1185">Reference proteome</keyword>
<keyword id="KW-0677">Repeat</keyword>
<keyword id="KW-0807">Transducer</keyword>